<dbReference type="EC" id="2.5.1.75" evidence="1"/>
<dbReference type="EMBL" id="CP000143">
    <property type="protein sequence ID" value="ABA78858.2"/>
    <property type="status" value="ALT_INIT"/>
    <property type="molecule type" value="Genomic_DNA"/>
</dbReference>
<dbReference type="RefSeq" id="WP_011337672.1">
    <property type="nucleotide sequence ID" value="NC_007493.2"/>
</dbReference>
<dbReference type="RefSeq" id="YP_352759.2">
    <property type="nucleotide sequence ID" value="NC_007493.2"/>
</dbReference>
<dbReference type="SMR" id="Q3J2X6"/>
<dbReference type="STRING" id="272943.RSP_2704"/>
<dbReference type="EnsemblBacteria" id="ABA78858">
    <property type="protein sequence ID" value="ABA78858"/>
    <property type="gene ID" value="RSP_2704"/>
</dbReference>
<dbReference type="GeneID" id="3720433"/>
<dbReference type="KEGG" id="rsp:RSP_2704"/>
<dbReference type="PATRIC" id="fig|272943.9.peg.1630"/>
<dbReference type="eggNOG" id="COG0324">
    <property type="taxonomic scope" value="Bacteria"/>
</dbReference>
<dbReference type="OrthoDB" id="9776390at2"/>
<dbReference type="PhylomeDB" id="Q3J2X6"/>
<dbReference type="Proteomes" id="UP000002703">
    <property type="component" value="Chromosome 1"/>
</dbReference>
<dbReference type="GO" id="GO:0005524">
    <property type="term" value="F:ATP binding"/>
    <property type="evidence" value="ECO:0007669"/>
    <property type="project" value="UniProtKB-UniRule"/>
</dbReference>
<dbReference type="GO" id="GO:0052381">
    <property type="term" value="F:tRNA dimethylallyltransferase activity"/>
    <property type="evidence" value="ECO:0007669"/>
    <property type="project" value="UniProtKB-UniRule"/>
</dbReference>
<dbReference type="GO" id="GO:0006400">
    <property type="term" value="P:tRNA modification"/>
    <property type="evidence" value="ECO:0007669"/>
    <property type="project" value="TreeGrafter"/>
</dbReference>
<dbReference type="Gene3D" id="1.10.20.140">
    <property type="match status" value="1"/>
</dbReference>
<dbReference type="Gene3D" id="3.40.50.300">
    <property type="entry name" value="P-loop containing nucleotide triphosphate hydrolases"/>
    <property type="match status" value="1"/>
</dbReference>
<dbReference type="HAMAP" id="MF_00185">
    <property type="entry name" value="IPP_trans"/>
    <property type="match status" value="1"/>
</dbReference>
<dbReference type="InterPro" id="IPR039657">
    <property type="entry name" value="Dimethylallyltransferase"/>
</dbReference>
<dbReference type="InterPro" id="IPR018022">
    <property type="entry name" value="IPT"/>
</dbReference>
<dbReference type="InterPro" id="IPR027417">
    <property type="entry name" value="P-loop_NTPase"/>
</dbReference>
<dbReference type="NCBIfam" id="TIGR00174">
    <property type="entry name" value="miaA"/>
    <property type="match status" value="1"/>
</dbReference>
<dbReference type="PANTHER" id="PTHR11088">
    <property type="entry name" value="TRNA DIMETHYLALLYLTRANSFERASE"/>
    <property type="match status" value="1"/>
</dbReference>
<dbReference type="PANTHER" id="PTHR11088:SF60">
    <property type="entry name" value="TRNA DIMETHYLALLYLTRANSFERASE"/>
    <property type="match status" value="1"/>
</dbReference>
<dbReference type="Pfam" id="PF01715">
    <property type="entry name" value="IPPT"/>
    <property type="match status" value="1"/>
</dbReference>
<dbReference type="SUPFAM" id="SSF52540">
    <property type="entry name" value="P-loop containing nucleoside triphosphate hydrolases"/>
    <property type="match status" value="2"/>
</dbReference>
<reference key="1">
    <citation type="submission" date="2005-09" db="EMBL/GenBank/DDBJ databases">
        <title>Complete sequence of chromosome 1 of Rhodobacter sphaeroides 2.4.1.</title>
        <authorList>
            <person name="Copeland A."/>
            <person name="Lucas S."/>
            <person name="Lapidus A."/>
            <person name="Barry K."/>
            <person name="Detter J.C."/>
            <person name="Glavina T."/>
            <person name="Hammon N."/>
            <person name="Israni S."/>
            <person name="Pitluck S."/>
            <person name="Richardson P."/>
            <person name="Mackenzie C."/>
            <person name="Choudhary M."/>
            <person name="Larimer F."/>
            <person name="Hauser L.J."/>
            <person name="Land M."/>
            <person name="Donohue T.J."/>
            <person name="Kaplan S."/>
        </authorList>
    </citation>
    <scope>NUCLEOTIDE SEQUENCE [LARGE SCALE GENOMIC DNA]</scope>
    <source>
        <strain>ATCC 17023 / DSM 158 / JCM 6121 / CCUG 31486 / LMG 2827 / NBRC 12203 / NCIMB 8253 / ATH 2.4.1.</strain>
    </source>
</reference>
<keyword id="KW-0067">ATP-binding</keyword>
<keyword id="KW-0460">Magnesium</keyword>
<keyword id="KW-0547">Nucleotide-binding</keyword>
<keyword id="KW-1185">Reference proteome</keyword>
<keyword id="KW-0808">Transferase</keyword>
<keyword id="KW-0819">tRNA processing</keyword>
<organism>
    <name type="scientific">Cereibacter sphaeroides (strain ATCC 17023 / DSM 158 / JCM 6121 / CCUG 31486 / LMG 2827 / NBRC 12203 / NCIMB 8253 / ATH 2.4.1.)</name>
    <name type="common">Rhodobacter sphaeroides</name>
    <dbReference type="NCBI Taxonomy" id="272943"/>
    <lineage>
        <taxon>Bacteria</taxon>
        <taxon>Pseudomonadati</taxon>
        <taxon>Pseudomonadota</taxon>
        <taxon>Alphaproteobacteria</taxon>
        <taxon>Rhodobacterales</taxon>
        <taxon>Paracoccaceae</taxon>
        <taxon>Cereibacter</taxon>
    </lineage>
</organism>
<comment type="function">
    <text evidence="1">Catalyzes the transfer of a dimethylallyl group onto the adenine at position 37 in tRNAs that read codons beginning with uridine, leading to the formation of N6-(dimethylallyl)adenosine (i(6)A).</text>
</comment>
<comment type="catalytic activity">
    <reaction evidence="1">
        <text>adenosine(37) in tRNA + dimethylallyl diphosphate = N(6)-dimethylallyladenosine(37) in tRNA + diphosphate</text>
        <dbReference type="Rhea" id="RHEA:26482"/>
        <dbReference type="Rhea" id="RHEA-COMP:10162"/>
        <dbReference type="Rhea" id="RHEA-COMP:10375"/>
        <dbReference type="ChEBI" id="CHEBI:33019"/>
        <dbReference type="ChEBI" id="CHEBI:57623"/>
        <dbReference type="ChEBI" id="CHEBI:74411"/>
        <dbReference type="ChEBI" id="CHEBI:74415"/>
        <dbReference type="EC" id="2.5.1.75"/>
    </reaction>
</comment>
<comment type="cofactor">
    <cofactor evidence="1">
        <name>Mg(2+)</name>
        <dbReference type="ChEBI" id="CHEBI:18420"/>
    </cofactor>
</comment>
<comment type="subunit">
    <text evidence="1">Monomer.</text>
</comment>
<comment type="similarity">
    <text evidence="1">Belongs to the IPP transferase family.</text>
</comment>
<comment type="sequence caution" evidence="3">
    <conflict type="erroneous initiation">
        <sequence resource="EMBL-CDS" id="ABA78858"/>
    </conflict>
    <text>Extended N-terminus.</text>
</comment>
<sequence length="314" mass="33780">MAEEPQRSPAPTSPFAFTVPSNSLSELPDIPPDRPVLIAGPTASGKSALAARLVEDGGGAVVNADALQVYDCWRLLSARPSAAEEAALPHRLYGHVGARQTYSAGHWLKEVAGVLAEGLRPVIVGGTGLYFSALTGGLAEIPHTPPEVRAAADARLAEAGLARMVAELDAETAARIDLQNPARVQRAWEVLRATGRGLARWQAETAPPLLPLSDATALVIRPDPAWLAQRIDSRFDLMMADGALDEVRAALPDWDPTLPSARAIGAPELVAHLRGEIPLDEAVAAAKLASRQYAKRQRTWFRNRMRLWHEIRLP</sequence>
<proteinExistence type="inferred from homology"/>
<protein>
    <recommendedName>
        <fullName evidence="1">tRNA dimethylallyltransferase</fullName>
        <ecNumber evidence="1">2.5.1.75</ecNumber>
    </recommendedName>
    <alternativeName>
        <fullName evidence="1">Dimethylallyl diphosphate:tRNA dimethylallyltransferase</fullName>
        <shortName evidence="1">DMAPP:tRNA dimethylallyltransferase</shortName>
        <shortName evidence="1">DMATase</shortName>
    </alternativeName>
    <alternativeName>
        <fullName evidence="1">Isopentenyl-diphosphate:tRNA isopentenyltransferase</fullName>
        <shortName evidence="1">IPP transferase</shortName>
        <shortName evidence="1">IPPT</shortName>
        <shortName evidence="1">IPTase</shortName>
    </alternativeName>
</protein>
<name>MIAA_CERS4</name>
<feature type="chain" id="PRO_0000377283" description="tRNA dimethylallyltransferase">
    <location>
        <begin position="1"/>
        <end position="314"/>
    </location>
</feature>
<feature type="region of interest" description="Disordered" evidence="2">
    <location>
        <begin position="1"/>
        <end position="25"/>
    </location>
</feature>
<feature type="binding site" evidence="1">
    <location>
        <begin position="40"/>
        <end position="47"/>
    </location>
    <ligand>
        <name>ATP</name>
        <dbReference type="ChEBI" id="CHEBI:30616"/>
    </ligand>
</feature>
<feature type="binding site" evidence="1">
    <location>
        <begin position="42"/>
        <end position="47"/>
    </location>
    <ligand>
        <name>substrate</name>
    </ligand>
</feature>
<feature type="site" description="Interaction with substrate tRNA" evidence="1">
    <location>
        <position position="127"/>
    </location>
</feature>
<feature type="site" description="Interaction with substrate tRNA" evidence="1">
    <location>
        <position position="149"/>
    </location>
</feature>
<evidence type="ECO:0000255" key="1">
    <source>
        <dbReference type="HAMAP-Rule" id="MF_00185"/>
    </source>
</evidence>
<evidence type="ECO:0000256" key="2">
    <source>
        <dbReference type="SAM" id="MobiDB-lite"/>
    </source>
</evidence>
<evidence type="ECO:0000305" key="3"/>
<accession>Q3J2X6</accession>
<gene>
    <name evidence="1" type="primary">miaA</name>
    <name type="ordered locus">RHOS4_12900</name>
    <name type="ORF">RSP_2704</name>
</gene>